<organism>
    <name type="scientific">Bacillus cereus (strain Q1)</name>
    <dbReference type="NCBI Taxonomy" id="361100"/>
    <lineage>
        <taxon>Bacteria</taxon>
        <taxon>Bacillati</taxon>
        <taxon>Bacillota</taxon>
        <taxon>Bacilli</taxon>
        <taxon>Bacillales</taxon>
        <taxon>Bacillaceae</taxon>
        <taxon>Bacillus</taxon>
        <taxon>Bacillus cereus group</taxon>
    </lineage>
</organism>
<proteinExistence type="inferred from homology"/>
<accession>B9IVD9</accession>
<protein>
    <recommendedName>
        <fullName evidence="1">Acyl carrier protein</fullName>
        <shortName evidence="1">ACP</shortName>
    </recommendedName>
</protein>
<dbReference type="EMBL" id="CP000227">
    <property type="protein sequence ID" value="ACM14063.1"/>
    <property type="molecule type" value="Genomic_DNA"/>
</dbReference>
<dbReference type="SMR" id="B9IVD9"/>
<dbReference type="KEGG" id="bcq:BCQ_3635"/>
<dbReference type="HOGENOM" id="CLU_108696_5_3_9"/>
<dbReference type="UniPathway" id="UPA00094"/>
<dbReference type="Proteomes" id="UP000000441">
    <property type="component" value="Chromosome"/>
</dbReference>
<dbReference type="GO" id="GO:0005829">
    <property type="term" value="C:cytosol"/>
    <property type="evidence" value="ECO:0007669"/>
    <property type="project" value="TreeGrafter"/>
</dbReference>
<dbReference type="GO" id="GO:0016020">
    <property type="term" value="C:membrane"/>
    <property type="evidence" value="ECO:0007669"/>
    <property type="project" value="GOC"/>
</dbReference>
<dbReference type="GO" id="GO:0000035">
    <property type="term" value="F:acyl binding"/>
    <property type="evidence" value="ECO:0007669"/>
    <property type="project" value="TreeGrafter"/>
</dbReference>
<dbReference type="GO" id="GO:0000036">
    <property type="term" value="F:acyl carrier activity"/>
    <property type="evidence" value="ECO:0007669"/>
    <property type="project" value="UniProtKB-UniRule"/>
</dbReference>
<dbReference type="GO" id="GO:0009245">
    <property type="term" value="P:lipid A biosynthetic process"/>
    <property type="evidence" value="ECO:0007669"/>
    <property type="project" value="TreeGrafter"/>
</dbReference>
<dbReference type="FunFam" id="1.10.1200.10:FF:000001">
    <property type="entry name" value="Acyl carrier protein"/>
    <property type="match status" value="1"/>
</dbReference>
<dbReference type="Gene3D" id="1.10.1200.10">
    <property type="entry name" value="ACP-like"/>
    <property type="match status" value="1"/>
</dbReference>
<dbReference type="HAMAP" id="MF_01217">
    <property type="entry name" value="Acyl_carrier"/>
    <property type="match status" value="1"/>
</dbReference>
<dbReference type="InterPro" id="IPR003231">
    <property type="entry name" value="ACP"/>
</dbReference>
<dbReference type="InterPro" id="IPR036736">
    <property type="entry name" value="ACP-like_sf"/>
</dbReference>
<dbReference type="InterPro" id="IPR009081">
    <property type="entry name" value="PP-bd_ACP"/>
</dbReference>
<dbReference type="InterPro" id="IPR006162">
    <property type="entry name" value="Ppantetheine_attach_site"/>
</dbReference>
<dbReference type="NCBIfam" id="TIGR00517">
    <property type="entry name" value="acyl_carrier"/>
    <property type="match status" value="1"/>
</dbReference>
<dbReference type="NCBIfam" id="NF002148">
    <property type="entry name" value="PRK00982.1-2"/>
    <property type="match status" value="1"/>
</dbReference>
<dbReference type="NCBIfam" id="NF002149">
    <property type="entry name" value="PRK00982.1-3"/>
    <property type="match status" value="1"/>
</dbReference>
<dbReference type="NCBIfam" id="NF002150">
    <property type="entry name" value="PRK00982.1-4"/>
    <property type="match status" value="1"/>
</dbReference>
<dbReference type="NCBIfam" id="NF002151">
    <property type="entry name" value="PRK00982.1-5"/>
    <property type="match status" value="1"/>
</dbReference>
<dbReference type="PANTHER" id="PTHR20863">
    <property type="entry name" value="ACYL CARRIER PROTEIN"/>
    <property type="match status" value="1"/>
</dbReference>
<dbReference type="PANTHER" id="PTHR20863:SF76">
    <property type="entry name" value="CARRIER DOMAIN-CONTAINING PROTEIN"/>
    <property type="match status" value="1"/>
</dbReference>
<dbReference type="Pfam" id="PF00550">
    <property type="entry name" value="PP-binding"/>
    <property type="match status" value="1"/>
</dbReference>
<dbReference type="SUPFAM" id="SSF47336">
    <property type="entry name" value="ACP-like"/>
    <property type="match status" value="1"/>
</dbReference>
<dbReference type="PROSITE" id="PS50075">
    <property type="entry name" value="CARRIER"/>
    <property type="match status" value="1"/>
</dbReference>
<dbReference type="PROSITE" id="PS00012">
    <property type="entry name" value="PHOSPHOPANTETHEINE"/>
    <property type="match status" value="1"/>
</dbReference>
<keyword id="KW-0963">Cytoplasm</keyword>
<keyword id="KW-0275">Fatty acid biosynthesis</keyword>
<keyword id="KW-0276">Fatty acid metabolism</keyword>
<keyword id="KW-0444">Lipid biosynthesis</keyword>
<keyword id="KW-0443">Lipid metabolism</keyword>
<keyword id="KW-0596">Phosphopantetheine</keyword>
<keyword id="KW-0597">Phosphoprotein</keyword>
<name>ACP_BACCQ</name>
<reference key="1">
    <citation type="journal article" date="2009" name="J. Bacteriol.">
        <title>Complete genome sequence of the extremophilic Bacillus cereus strain Q1 with industrial applications.</title>
        <authorList>
            <person name="Xiong Z."/>
            <person name="Jiang Y."/>
            <person name="Qi D."/>
            <person name="Lu H."/>
            <person name="Yang F."/>
            <person name="Yang J."/>
            <person name="Chen L."/>
            <person name="Sun L."/>
            <person name="Xu X."/>
            <person name="Xue Y."/>
            <person name="Zhu Y."/>
            <person name="Jin Q."/>
        </authorList>
    </citation>
    <scope>NUCLEOTIDE SEQUENCE [LARGE SCALE GENOMIC DNA]</scope>
    <source>
        <strain>Q1</strain>
    </source>
</reference>
<feature type="chain" id="PRO_1000164771" description="Acyl carrier protein">
    <location>
        <begin position="1"/>
        <end position="77"/>
    </location>
</feature>
<feature type="domain" description="Carrier" evidence="2">
    <location>
        <begin position="2"/>
        <end position="77"/>
    </location>
</feature>
<feature type="modified residue" description="O-(pantetheine 4'-phosphoryl)serine" evidence="2">
    <location>
        <position position="37"/>
    </location>
</feature>
<evidence type="ECO:0000255" key="1">
    <source>
        <dbReference type="HAMAP-Rule" id="MF_01217"/>
    </source>
</evidence>
<evidence type="ECO:0000255" key="2">
    <source>
        <dbReference type="PROSITE-ProRule" id="PRU00258"/>
    </source>
</evidence>
<comment type="function">
    <text evidence="1">Carrier of the growing fatty acid chain in fatty acid biosynthesis.</text>
</comment>
<comment type="pathway">
    <text evidence="1">Lipid metabolism; fatty acid biosynthesis.</text>
</comment>
<comment type="subcellular location">
    <subcellularLocation>
        <location evidence="1">Cytoplasm</location>
    </subcellularLocation>
</comment>
<comment type="PTM">
    <text evidence="1">4'-phosphopantetheine is transferred from CoA to a specific serine of apo-ACP by AcpS. This modification is essential for activity because fatty acids are bound in thioester linkage to the sulfhydryl of the prosthetic group.</text>
</comment>
<comment type="similarity">
    <text evidence="1">Belongs to the acyl carrier protein (ACP) family.</text>
</comment>
<gene>
    <name evidence="1" type="primary">acpP</name>
    <name type="ordered locus">BCQ_3635</name>
</gene>
<sequence length="77" mass="8513">MADVLERVTKIIVDRLGVEETEVVPAASFKEDLGADSLDVVELVMQLEDEFEMEISDEDAEKIATVGDAVTYIESHL</sequence>